<feature type="chain" id="PRO_0000319254" description="Formate-dependent phosphoribosylglycinamide formyltransferase">
    <location>
        <begin position="1"/>
        <end position="393"/>
    </location>
</feature>
<feature type="domain" description="ATP-grasp" evidence="1">
    <location>
        <begin position="119"/>
        <end position="308"/>
    </location>
</feature>
<feature type="binding site" evidence="1">
    <location>
        <begin position="22"/>
        <end position="23"/>
    </location>
    <ligand>
        <name>N(1)-(5-phospho-beta-D-ribosyl)glycinamide</name>
        <dbReference type="ChEBI" id="CHEBI:143788"/>
    </ligand>
</feature>
<feature type="binding site" evidence="1">
    <location>
        <position position="82"/>
    </location>
    <ligand>
        <name>N(1)-(5-phospho-beta-D-ribosyl)glycinamide</name>
        <dbReference type="ChEBI" id="CHEBI:143788"/>
    </ligand>
</feature>
<feature type="binding site" evidence="1">
    <location>
        <position position="114"/>
    </location>
    <ligand>
        <name>ATP</name>
        <dbReference type="ChEBI" id="CHEBI:30616"/>
    </ligand>
</feature>
<feature type="binding site" evidence="1">
    <location>
        <position position="155"/>
    </location>
    <ligand>
        <name>ATP</name>
        <dbReference type="ChEBI" id="CHEBI:30616"/>
    </ligand>
</feature>
<feature type="binding site" evidence="1">
    <location>
        <begin position="160"/>
        <end position="165"/>
    </location>
    <ligand>
        <name>ATP</name>
        <dbReference type="ChEBI" id="CHEBI:30616"/>
    </ligand>
</feature>
<feature type="binding site" evidence="1">
    <location>
        <begin position="195"/>
        <end position="198"/>
    </location>
    <ligand>
        <name>ATP</name>
        <dbReference type="ChEBI" id="CHEBI:30616"/>
    </ligand>
</feature>
<feature type="binding site" evidence="1">
    <location>
        <position position="203"/>
    </location>
    <ligand>
        <name>ATP</name>
        <dbReference type="ChEBI" id="CHEBI:30616"/>
    </ligand>
</feature>
<feature type="binding site" evidence="1">
    <location>
        <position position="267"/>
    </location>
    <ligand>
        <name>Mg(2+)</name>
        <dbReference type="ChEBI" id="CHEBI:18420"/>
    </ligand>
</feature>
<feature type="binding site" evidence="1">
    <location>
        <position position="279"/>
    </location>
    <ligand>
        <name>Mg(2+)</name>
        <dbReference type="ChEBI" id="CHEBI:18420"/>
    </ligand>
</feature>
<feature type="binding site" evidence="1">
    <location>
        <position position="286"/>
    </location>
    <ligand>
        <name>N(1)-(5-phospho-beta-D-ribosyl)glycinamide</name>
        <dbReference type="ChEBI" id="CHEBI:143788"/>
    </ligand>
</feature>
<feature type="binding site" evidence="1">
    <location>
        <position position="356"/>
    </location>
    <ligand>
        <name>N(1)-(5-phospho-beta-D-ribosyl)glycinamide</name>
        <dbReference type="ChEBI" id="CHEBI:143788"/>
    </ligand>
</feature>
<feature type="binding site" evidence="1">
    <location>
        <begin position="363"/>
        <end position="364"/>
    </location>
    <ligand>
        <name>N(1)-(5-phospho-beta-D-ribosyl)glycinamide</name>
        <dbReference type="ChEBI" id="CHEBI:143788"/>
    </ligand>
</feature>
<sequence>MLQIGTTFSKTATKILLCGAGELGKEVAIEAQRLGLEVIALDRYENAPAMQVADRSYTLSMLDGEALRHIIEKEKPDYIVPEIEAIATDTLAKLEQEGFNIVPSAKATQLTMNREGIRRLAAEDLGIPTSPYAFADNKEDFTAAVDAIGIPCVVKPIMSSSGKGQSVIKSTADIDSAWHYAQEGGRAGKGKVIIEGFVDFDYEITLLTIRHKNGTSFCAPIGHIQEDGDYRQSWQPHPMSDIAVQSAEKIALKITEALGGWGLFGVELFIKDDQVIFSEVSPRPHDTGLVTLISQDLSEFALHLRAILGLPIPNITQHGPSASSVILPTGHSTETQFSGLEDALKEPDTQIRLFGKPEIAGRRRMGVALARDTSIEKAIEKAKASAMAVKVDF</sequence>
<dbReference type="EC" id="6.3.1.21" evidence="1"/>
<dbReference type="EMBL" id="CP000109">
    <property type="protein sequence ID" value="ABB42720.1"/>
    <property type="molecule type" value="Genomic_DNA"/>
</dbReference>
<dbReference type="SMR" id="Q31DQ3"/>
<dbReference type="STRING" id="317025.Tcr_2132"/>
<dbReference type="KEGG" id="tcx:Tcr_2132"/>
<dbReference type="eggNOG" id="COG0027">
    <property type="taxonomic scope" value="Bacteria"/>
</dbReference>
<dbReference type="HOGENOM" id="CLU_011534_1_3_6"/>
<dbReference type="OrthoDB" id="9804625at2"/>
<dbReference type="UniPathway" id="UPA00074">
    <property type="reaction ID" value="UER00127"/>
</dbReference>
<dbReference type="GO" id="GO:0005829">
    <property type="term" value="C:cytosol"/>
    <property type="evidence" value="ECO:0007669"/>
    <property type="project" value="TreeGrafter"/>
</dbReference>
<dbReference type="GO" id="GO:0005524">
    <property type="term" value="F:ATP binding"/>
    <property type="evidence" value="ECO:0007669"/>
    <property type="project" value="UniProtKB-UniRule"/>
</dbReference>
<dbReference type="GO" id="GO:0000287">
    <property type="term" value="F:magnesium ion binding"/>
    <property type="evidence" value="ECO:0007669"/>
    <property type="project" value="InterPro"/>
</dbReference>
<dbReference type="GO" id="GO:0043815">
    <property type="term" value="F:phosphoribosylglycinamide formyltransferase 2 activity"/>
    <property type="evidence" value="ECO:0007669"/>
    <property type="project" value="UniProtKB-UniRule"/>
</dbReference>
<dbReference type="GO" id="GO:0004644">
    <property type="term" value="F:phosphoribosylglycinamide formyltransferase activity"/>
    <property type="evidence" value="ECO:0007669"/>
    <property type="project" value="InterPro"/>
</dbReference>
<dbReference type="GO" id="GO:0006189">
    <property type="term" value="P:'de novo' IMP biosynthetic process"/>
    <property type="evidence" value="ECO:0007669"/>
    <property type="project" value="UniProtKB-UniRule"/>
</dbReference>
<dbReference type="FunFam" id="3.30.1490.20:FF:000013">
    <property type="entry name" value="Formate-dependent phosphoribosylglycinamide formyltransferase"/>
    <property type="match status" value="1"/>
</dbReference>
<dbReference type="FunFam" id="3.30.470.20:FF:000027">
    <property type="entry name" value="Formate-dependent phosphoribosylglycinamide formyltransferase"/>
    <property type="match status" value="1"/>
</dbReference>
<dbReference type="FunFam" id="3.40.50.20:FF:000007">
    <property type="entry name" value="Formate-dependent phosphoribosylglycinamide formyltransferase"/>
    <property type="match status" value="1"/>
</dbReference>
<dbReference type="Gene3D" id="3.40.50.20">
    <property type="match status" value="1"/>
</dbReference>
<dbReference type="Gene3D" id="3.30.1490.20">
    <property type="entry name" value="ATP-grasp fold, A domain"/>
    <property type="match status" value="1"/>
</dbReference>
<dbReference type="Gene3D" id="3.30.470.20">
    <property type="entry name" value="ATP-grasp fold, B domain"/>
    <property type="match status" value="1"/>
</dbReference>
<dbReference type="HAMAP" id="MF_01643">
    <property type="entry name" value="PurT"/>
    <property type="match status" value="1"/>
</dbReference>
<dbReference type="InterPro" id="IPR011761">
    <property type="entry name" value="ATP-grasp"/>
</dbReference>
<dbReference type="InterPro" id="IPR003135">
    <property type="entry name" value="ATP-grasp_carboxylate-amine"/>
</dbReference>
<dbReference type="InterPro" id="IPR013815">
    <property type="entry name" value="ATP_grasp_subdomain_1"/>
</dbReference>
<dbReference type="InterPro" id="IPR016185">
    <property type="entry name" value="PreATP-grasp_dom_sf"/>
</dbReference>
<dbReference type="InterPro" id="IPR005862">
    <property type="entry name" value="PurT"/>
</dbReference>
<dbReference type="InterPro" id="IPR054350">
    <property type="entry name" value="PurT/PurK_preATP-grasp"/>
</dbReference>
<dbReference type="InterPro" id="IPR048740">
    <property type="entry name" value="PurT_C"/>
</dbReference>
<dbReference type="InterPro" id="IPR011054">
    <property type="entry name" value="Rudment_hybrid_motif"/>
</dbReference>
<dbReference type="NCBIfam" id="NF006766">
    <property type="entry name" value="PRK09288.1"/>
    <property type="match status" value="1"/>
</dbReference>
<dbReference type="NCBIfam" id="TIGR01142">
    <property type="entry name" value="purT"/>
    <property type="match status" value="1"/>
</dbReference>
<dbReference type="PANTHER" id="PTHR43055">
    <property type="entry name" value="FORMATE-DEPENDENT PHOSPHORIBOSYLGLYCINAMIDE FORMYLTRANSFERASE"/>
    <property type="match status" value="1"/>
</dbReference>
<dbReference type="PANTHER" id="PTHR43055:SF1">
    <property type="entry name" value="FORMATE-DEPENDENT PHOSPHORIBOSYLGLYCINAMIDE FORMYLTRANSFERASE"/>
    <property type="match status" value="1"/>
</dbReference>
<dbReference type="Pfam" id="PF02222">
    <property type="entry name" value="ATP-grasp"/>
    <property type="match status" value="1"/>
</dbReference>
<dbReference type="Pfam" id="PF21244">
    <property type="entry name" value="PurT_C"/>
    <property type="match status" value="1"/>
</dbReference>
<dbReference type="Pfam" id="PF22660">
    <property type="entry name" value="RS_preATP-grasp-like"/>
    <property type="match status" value="1"/>
</dbReference>
<dbReference type="SUPFAM" id="SSF56059">
    <property type="entry name" value="Glutathione synthetase ATP-binding domain-like"/>
    <property type="match status" value="1"/>
</dbReference>
<dbReference type="SUPFAM" id="SSF52440">
    <property type="entry name" value="PreATP-grasp domain"/>
    <property type="match status" value="1"/>
</dbReference>
<dbReference type="SUPFAM" id="SSF51246">
    <property type="entry name" value="Rudiment single hybrid motif"/>
    <property type="match status" value="1"/>
</dbReference>
<dbReference type="PROSITE" id="PS50975">
    <property type="entry name" value="ATP_GRASP"/>
    <property type="match status" value="1"/>
</dbReference>
<proteinExistence type="inferred from homology"/>
<protein>
    <recommendedName>
        <fullName evidence="1">Formate-dependent phosphoribosylglycinamide formyltransferase</fullName>
        <ecNumber evidence="1">6.3.1.21</ecNumber>
    </recommendedName>
    <alternativeName>
        <fullName evidence="1">5'-phosphoribosylglycinamide transformylase 2</fullName>
    </alternativeName>
    <alternativeName>
        <fullName evidence="1">Formate-dependent GAR transformylase</fullName>
    </alternativeName>
    <alternativeName>
        <fullName evidence="1">GAR transformylase 2</fullName>
        <shortName evidence="1">GART 2</shortName>
    </alternativeName>
    <alternativeName>
        <fullName evidence="1">Non-folate glycinamide ribonucleotide transformylase</fullName>
    </alternativeName>
    <alternativeName>
        <fullName evidence="1">Phosphoribosylglycinamide formyltransferase 2</fullName>
    </alternativeName>
</protein>
<gene>
    <name evidence="1" type="primary">purT</name>
    <name type="ordered locus">Tcr_2132</name>
</gene>
<accession>Q31DQ3</accession>
<organism>
    <name type="scientific">Hydrogenovibrio crunogenus (strain DSM 25203 / XCL-2)</name>
    <name type="common">Thiomicrospira crunogena</name>
    <dbReference type="NCBI Taxonomy" id="317025"/>
    <lineage>
        <taxon>Bacteria</taxon>
        <taxon>Pseudomonadati</taxon>
        <taxon>Pseudomonadota</taxon>
        <taxon>Gammaproteobacteria</taxon>
        <taxon>Thiotrichales</taxon>
        <taxon>Piscirickettsiaceae</taxon>
        <taxon>Hydrogenovibrio</taxon>
    </lineage>
</organism>
<reference key="1">
    <citation type="journal article" date="2006" name="PLoS Biol.">
        <title>The genome of deep-sea vent chemolithoautotroph Thiomicrospira crunogena XCL-2.</title>
        <authorList>
            <person name="Scott K.M."/>
            <person name="Sievert S.M."/>
            <person name="Abril F.N."/>
            <person name="Ball L.A."/>
            <person name="Barrett C.J."/>
            <person name="Blake R.A."/>
            <person name="Boller A.J."/>
            <person name="Chain P.S.G."/>
            <person name="Clark J.A."/>
            <person name="Davis C.R."/>
            <person name="Detter C."/>
            <person name="Do K.F."/>
            <person name="Dobrinski K.P."/>
            <person name="Faza B.I."/>
            <person name="Fitzpatrick K.A."/>
            <person name="Freyermuth S.K."/>
            <person name="Harmer T.L."/>
            <person name="Hauser L.J."/>
            <person name="Huegler M."/>
            <person name="Kerfeld C.A."/>
            <person name="Klotz M.G."/>
            <person name="Kong W.W."/>
            <person name="Land M."/>
            <person name="Lapidus A."/>
            <person name="Larimer F.W."/>
            <person name="Longo D.L."/>
            <person name="Lucas S."/>
            <person name="Malfatti S.A."/>
            <person name="Massey S.E."/>
            <person name="Martin D.D."/>
            <person name="McCuddin Z."/>
            <person name="Meyer F."/>
            <person name="Moore J.L."/>
            <person name="Ocampo L.H. Jr."/>
            <person name="Paul J.H."/>
            <person name="Paulsen I.T."/>
            <person name="Reep D.K."/>
            <person name="Ren Q."/>
            <person name="Ross R.L."/>
            <person name="Sato P.Y."/>
            <person name="Thomas P."/>
            <person name="Tinkham L.E."/>
            <person name="Zeruth G.T."/>
        </authorList>
    </citation>
    <scope>NUCLEOTIDE SEQUENCE [LARGE SCALE GENOMIC DNA]</scope>
    <source>
        <strain>DSM 25203 / XCL-2</strain>
    </source>
</reference>
<evidence type="ECO:0000255" key="1">
    <source>
        <dbReference type="HAMAP-Rule" id="MF_01643"/>
    </source>
</evidence>
<keyword id="KW-0067">ATP-binding</keyword>
<keyword id="KW-0436">Ligase</keyword>
<keyword id="KW-0460">Magnesium</keyword>
<keyword id="KW-0479">Metal-binding</keyword>
<keyword id="KW-0547">Nucleotide-binding</keyword>
<keyword id="KW-0658">Purine biosynthesis</keyword>
<comment type="function">
    <text evidence="1">Involved in the de novo purine biosynthesis. Catalyzes the transfer of formate to 5-phospho-ribosyl-glycinamide (GAR), producing 5-phospho-ribosyl-N-formylglycinamide (FGAR). Formate is provided by PurU via hydrolysis of 10-formyl-tetrahydrofolate.</text>
</comment>
<comment type="catalytic activity">
    <reaction evidence="1">
        <text>N(1)-(5-phospho-beta-D-ribosyl)glycinamide + formate + ATP = N(2)-formyl-N(1)-(5-phospho-beta-D-ribosyl)glycinamide + ADP + phosphate + H(+)</text>
        <dbReference type="Rhea" id="RHEA:24829"/>
        <dbReference type="ChEBI" id="CHEBI:15378"/>
        <dbReference type="ChEBI" id="CHEBI:15740"/>
        <dbReference type="ChEBI" id="CHEBI:30616"/>
        <dbReference type="ChEBI" id="CHEBI:43474"/>
        <dbReference type="ChEBI" id="CHEBI:143788"/>
        <dbReference type="ChEBI" id="CHEBI:147286"/>
        <dbReference type="ChEBI" id="CHEBI:456216"/>
        <dbReference type="EC" id="6.3.1.21"/>
    </reaction>
    <physiologicalReaction direction="left-to-right" evidence="1">
        <dbReference type="Rhea" id="RHEA:24830"/>
    </physiologicalReaction>
</comment>
<comment type="pathway">
    <text evidence="1">Purine metabolism; IMP biosynthesis via de novo pathway; N(2)-formyl-N(1)-(5-phospho-D-ribosyl)glycinamide from N(1)-(5-phospho-D-ribosyl)glycinamide (formate route): step 1/1.</text>
</comment>
<comment type="subunit">
    <text evidence="1">Homodimer.</text>
</comment>
<comment type="similarity">
    <text evidence="1">Belongs to the PurK/PurT family.</text>
</comment>
<name>PURT_HYDCU</name>